<protein>
    <recommendedName>
        <fullName>DNA polymerase processivity factor</fullName>
    </recommendedName>
    <alternativeName>
        <fullName>Polymerase accessory protein</fullName>
        <shortName>PAP</shortName>
    </alternativeName>
</protein>
<feature type="chain" id="PRO_0000116067" description="DNA polymerase processivity factor">
    <location>
        <begin position="1"/>
        <end position="364"/>
    </location>
</feature>
<feature type="region of interest" description="Disordered" evidence="2">
    <location>
        <begin position="1"/>
        <end position="24"/>
    </location>
</feature>
<feature type="region of interest" description="Disordered" evidence="2">
    <location>
        <begin position="284"/>
        <end position="306"/>
    </location>
</feature>
<feature type="region of interest" description="Disordered" evidence="2">
    <location>
        <begin position="325"/>
        <end position="364"/>
    </location>
</feature>
<reference key="1">
    <citation type="journal article" date="1996" name="J. Virol.">
        <title>Determination and analysis of the complete nucleotide sequence of human herpesvirus.</title>
        <authorList>
            <person name="Nicholas J."/>
        </authorList>
    </citation>
    <scope>NUCLEOTIDE SEQUENCE [LARGE SCALE GENOMIC DNA]</scope>
</reference>
<evidence type="ECO:0000250" key="1"/>
<evidence type="ECO:0000256" key="2">
    <source>
        <dbReference type="SAM" id="MobiDB-lite"/>
    </source>
</evidence>
<evidence type="ECO:0000305" key="3"/>
<accession>P52440</accession>
<sequence>MDRSNREHHSHRDHREHRDSKEPPTMAFHMKTWKTINKPLRAFAKLLRENTTVTFTPQPAIIIQSAKNHLVLKLIIHAECLYITDTDHFSTKTINNFVPLFDSFMGIISNPDVTKLYIQHDSDLYTRFLVTASDICAQASIPCVNGQEIVRESGKSALRIDLDHSTVTEILKWLAPVTKNKRSNKNEMTLAQIVVQVNPPSIKFLTDLNEIEFAHSGKVVFHDAKCMRLVLSSKNLQQAFSTCAVLKSSCSLRAIAGKEYKLFLIAKNVFLTVEAYLSQEQVKDDPKFERQAKTEEKGEKNHKVEEGNNFFCKQETQHKITSYMVPTKNGGTGTNFFNEKEDSESDDSAHFDYTPNSKRQRCGM</sequence>
<organismHost>
    <name type="scientific">Homo sapiens</name>
    <name type="common">Human</name>
    <dbReference type="NCBI Taxonomy" id="9606"/>
</organismHost>
<proteinExistence type="inferred from homology"/>
<comment type="function">
    <text evidence="1">Accessory subunit of the DNA polymerase that acts to increase the processivity of polymerization.</text>
</comment>
<comment type="similarity">
    <text evidence="3">Belongs to the herpesviridae polymerase accessory protein family.</text>
</comment>
<name>VPAP_HHV7J</name>
<keyword id="KW-0235">DNA replication</keyword>
<keyword id="KW-0238">DNA-binding</keyword>
<keyword id="KW-1185">Reference proteome</keyword>
<gene>
    <name type="primary">U27</name>
</gene>
<organism>
    <name type="scientific">Human herpesvirus 7 (strain JI)</name>
    <name type="common">HHV-7</name>
    <name type="synonym">Human T lymphotropic virus</name>
    <dbReference type="NCBI Taxonomy" id="57278"/>
    <lineage>
        <taxon>Viruses</taxon>
        <taxon>Duplodnaviria</taxon>
        <taxon>Heunggongvirae</taxon>
        <taxon>Peploviricota</taxon>
        <taxon>Herviviricetes</taxon>
        <taxon>Herpesvirales</taxon>
        <taxon>Orthoherpesviridae</taxon>
        <taxon>Betaherpesvirinae</taxon>
        <taxon>Roseolovirus</taxon>
        <taxon>Roseolovirus humanbeta7</taxon>
        <taxon>Human betaherpesvirus 7</taxon>
    </lineage>
</organism>
<dbReference type="EMBL" id="U43400">
    <property type="protein sequence ID" value="AAC54689.1"/>
    <property type="molecule type" value="Genomic_DNA"/>
</dbReference>
<dbReference type="PIR" id="T41929">
    <property type="entry name" value="T41929"/>
</dbReference>
<dbReference type="RefSeq" id="YP_073767.1">
    <property type="nucleotide sequence ID" value="NC_001716.2"/>
</dbReference>
<dbReference type="SMR" id="P52440"/>
<dbReference type="DNASU" id="3289485"/>
<dbReference type="GeneID" id="3289485"/>
<dbReference type="KEGG" id="vg:3289485"/>
<dbReference type="Proteomes" id="UP000009246">
    <property type="component" value="Segment"/>
</dbReference>
<dbReference type="GO" id="GO:0003677">
    <property type="term" value="F:DNA binding"/>
    <property type="evidence" value="ECO:0007669"/>
    <property type="project" value="UniProtKB-KW"/>
</dbReference>
<dbReference type="GO" id="GO:0030337">
    <property type="term" value="F:DNA polymerase processivity factor activity"/>
    <property type="evidence" value="ECO:0007669"/>
    <property type="project" value="InterPro"/>
</dbReference>
<dbReference type="GO" id="GO:0006260">
    <property type="term" value="P:DNA replication"/>
    <property type="evidence" value="ECO:0007669"/>
    <property type="project" value="UniProtKB-KW"/>
</dbReference>
<dbReference type="GO" id="GO:0019079">
    <property type="term" value="P:viral genome replication"/>
    <property type="evidence" value="ECO:0007669"/>
    <property type="project" value="InterPro"/>
</dbReference>
<dbReference type="Gene3D" id="3.70.10.10">
    <property type="match status" value="1"/>
</dbReference>
<dbReference type="InterPro" id="IPR046938">
    <property type="entry name" value="DNA_clamp_sf"/>
</dbReference>
<dbReference type="InterPro" id="IPR004997">
    <property type="entry name" value="Herpes_PAP"/>
</dbReference>
<dbReference type="Pfam" id="PF03325">
    <property type="entry name" value="Herpes_PAP"/>
    <property type="match status" value="1"/>
</dbReference>
<dbReference type="SUPFAM" id="SSF55979">
    <property type="entry name" value="DNA clamp"/>
    <property type="match status" value="2"/>
</dbReference>